<keyword id="KW-0002">3D-structure</keyword>
<keyword id="KW-0025">Alternative splicing</keyword>
<keyword id="KW-0963">Cytoplasm</keyword>
<keyword id="KW-0223">Dioxygenase</keyword>
<keyword id="KW-0225">Disease variant</keyword>
<keyword id="KW-0408">Iron</keyword>
<keyword id="KW-0479">Metal-binding</keyword>
<keyword id="KW-0560">Oxidoreductase</keyword>
<keyword id="KW-1267">Proteomics identification</keyword>
<keyword id="KW-0662">Pyridine nucleotide biosynthesis</keyword>
<keyword id="KW-1185">Reference proteome</keyword>
<evidence type="ECO:0000255" key="1">
    <source>
        <dbReference type="HAMAP-Rule" id="MF_03019"/>
    </source>
</evidence>
<evidence type="ECO:0000269" key="2">
    <source>
    </source>
</evidence>
<evidence type="ECO:0000269" key="3">
    <source>
    </source>
</evidence>
<evidence type="ECO:0000269" key="4">
    <source>
    </source>
</evidence>
<evidence type="ECO:0000269" key="5">
    <source ref="10"/>
</evidence>
<evidence type="ECO:0000269" key="6">
    <source ref="2"/>
</evidence>
<evidence type="ECO:0000269" key="7">
    <source ref="6"/>
</evidence>
<evidence type="ECO:0000303" key="8">
    <source>
    </source>
</evidence>
<evidence type="ECO:0000303" key="9">
    <source>
    </source>
</evidence>
<evidence type="ECO:0000303" key="10">
    <source ref="3"/>
</evidence>
<evidence type="ECO:0000305" key="11">
    <source>
    </source>
</evidence>
<evidence type="ECO:0000312" key="12">
    <source>
        <dbReference type="HGNC" id="HGNC:4796"/>
    </source>
</evidence>
<evidence type="ECO:0007744" key="13">
    <source>
        <dbReference type="PDB" id="5TK5"/>
    </source>
</evidence>
<evidence type="ECO:0007744" key="14">
    <source>
        <dbReference type="PDB" id="5TKQ"/>
    </source>
</evidence>
<evidence type="ECO:0007829" key="15">
    <source>
        <dbReference type="PDB" id="2QNK"/>
    </source>
</evidence>
<proteinExistence type="evidence at protein level"/>
<sequence>MERRLGVRAWVKENRGSFQPPVCNKLMHQEQLKVMFIGGPNTRKDYHIEEGEEVFYQLEGDMVLRVLEQGKHRDVVIRQGEIFLLPARVPHSPQRFANTVGLVVERRRLETELDGLRYYVGDTMDVLFEKWFYCKDLGTQLAPIIQEFFSSEQYRTGKPIPDQLLKEPPFPLSTRSIMEPMSLDAWLDSHHRELQAGTPLSLFGDTYETQVIAYGQGSSEGLRQNVDVWLWQLEGSSVVTMGGRRLSLAPDDSLLVLAGTSYAWERTQGSVALSVTQDPACKKPLG</sequence>
<gene>
    <name evidence="1 12" type="primary">HAAO</name>
</gene>
<name>3HAO_HUMAN</name>
<organism>
    <name type="scientific">Homo sapiens</name>
    <name type="common">Human</name>
    <dbReference type="NCBI Taxonomy" id="9606"/>
    <lineage>
        <taxon>Eukaryota</taxon>
        <taxon>Metazoa</taxon>
        <taxon>Chordata</taxon>
        <taxon>Craniata</taxon>
        <taxon>Vertebrata</taxon>
        <taxon>Euteleostomi</taxon>
        <taxon>Mammalia</taxon>
        <taxon>Eutheria</taxon>
        <taxon>Euarchontoglires</taxon>
        <taxon>Primates</taxon>
        <taxon>Haplorrhini</taxon>
        <taxon>Catarrhini</taxon>
        <taxon>Hominidae</taxon>
        <taxon>Homo</taxon>
    </lineage>
</organism>
<accession>P46952</accession>
<accession>A6NE56</accession>
<accession>B4DIN2</accession>
<accession>Q53QZ7</accession>
<accession>Q8N6N9</accession>
<feature type="chain" id="PRO_0000064372" description="3-hydroxyanthranilate 3,4-dioxygenase">
    <location>
        <begin position="1"/>
        <end position="286"/>
    </location>
</feature>
<feature type="region of interest" description="Domain A (catalytic)" evidence="1">
    <location>
        <begin position="1"/>
        <end position="160"/>
    </location>
</feature>
<feature type="region of interest" description="Linker" evidence="1">
    <location>
        <begin position="161"/>
        <end position="177"/>
    </location>
</feature>
<feature type="region of interest" description="Domain B" evidence="1">
    <location>
        <begin position="178"/>
        <end position="286"/>
    </location>
</feature>
<feature type="binding site" evidence="1">
    <location>
        <position position="43"/>
    </location>
    <ligand>
        <name>O2</name>
        <dbReference type="ChEBI" id="CHEBI:15379"/>
    </ligand>
</feature>
<feature type="binding site" evidence="1 2 13">
    <location>
        <position position="47"/>
    </location>
    <ligand>
        <name>Fe cation</name>
        <dbReference type="ChEBI" id="CHEBI:24875"/>
        <note>catalytic</note>
    </ligand>
</feature>
<feature type="binding site" evidence="1 2 13">
    <location>
        <position position="53"/>
    </location>
    <ligand>
        <name>Fe cation</name>
        <dbReference type="ChEBI" id="CHEBI:24875"/>
        <note>catalytic</note>
    </ligand>
</feature>
<feature type="binding site" evidence="1">
    <location>
        <position position="53"/>
    </location>
    <ligand>
        <name>substrate</name>
    </ligand>
</feature>
<feature type="binding site" evidence="1 2 13">
    <location>
        <position position="91"/>
    </location>
    <ligand>
        <name>Fe cation</name>
        <dbReference type="ChEBI" id="CHEBI:24875"/>
        <note>catalytic</note>
    </ligand>
</feature>
<feature type="binding site" evidence="1">
    <location>
        <position position="95"/>
    </location>
    <ligand>
        <name>substrate</name>
    </ligand>
</feature>
<feature type="binding site" evidence="1">
    <location>
        <position position="105"/>
    </location>
    <ligand>
        <name>substrate</name>
    </ligand>
</feature>
<feature type="splice variant" id="VSP_036239" description="In isoform 2." evidence="8 10">
    <location>
        <begin position="148"/>
        <end position="286"/>
    </location>
</feature>
<feature type="sequence variant" id="VAR_021507" description="In dbSNP:rs3816183." evidence="4 6 7">
    <original>I</original>
    <variation>V</variation>
    <location>
        <position position="37"/>
    </location>
</feature>
<feature type="sequence variant" id="VAR_030470" description="In dbSNP:rs3816182.">
    <original>T</original>
    <variation>S</variation>
    <location>
        <position position="42"/>
    </location>
</feature>
<feature type="sequence variant" id="VAR_080252" description="In VCRL1; strongly reduced 3-hydroxyanthranilate 3,4-dioxygenase activity in vitro." evidence="3">
    <location>
        <begin position="162"/>
        <end position="286"/>
    </location>
</feature>
<feature type="sequence variant" id="VAR_080253" description="In VCRL1; strongly reduced 3-hydroxyanthranilate 3,4-dioxygenase activity in vitro." evidence="3">
    <location>
        <begin position="186"/>
        <end position="286"/>
    </location>
</feature>
<feature type="strand" evidence="15">
    <location>
        <begin position="4"/>
        <end position="6"/>
    </location>
</feature>
<feature type="helix" evidence="15">
    <location>
        <begin position="7"/>
        <end position="13"/>
    </location>
</feature>
<feature type="helix" evidence="15">
    <location>
        <begin position="15"/>
        <end position="17"/>
    </location>
</feature>
<feature type="turn" evidence="15">
    <location>
        <begin position="20"/>
        <end position="22"/>
    </location>
</feature>
<feature type="strand" evidence="15">
    <location>
        <begin position="24"/>
        <end position="37"/>
    </location>
</feature>
<feature type="strand" evidence="15">
    <location>
        <begin position="46"/>
        <end position="48"/>
    </location>
</feature>
<feature type="strand" evidence="15">
    <location>
        <begin position="53"/>
        <end position="60"/>
    </location>
</feature>
<feature type="strand" evidence="15">
    <location>
        <begin position="62"/>
        <end position="68"/>
    </location>
</feature>
<feature type="strand" evidence="15">
    <location>
        <begin position="71"/>
        <end position="77"/>
    </location>
</feature>
<feature type="strand" evidence="15">
    <location>
        <begin position="81"/>
        <end position="85"/>
    </location>
</feature>
<feature type="strand" evidence="15">
    <location>
        <begin position="91"/>
        <end position="95"/>
    </location>
</feature>
<feature type="strand" evidence="15">
    <location>
        <begin position="100"/>
        <end position="106"/>
    </location>
</feature>
<feature type="strand" evidence="15">
    <location>
        <begin position="114"/>
        <end position="120"/>
    </location>
</feature>
<feature type="strand" evidence="15">
    <location>
        <begin position="123"/>
        <end position="132"/>
    </location>
</feature>
<feature type="helix" evidence="15">
    <location>
        <begin position="137"/>
        <end position="149"/>
    </location>
</feature>
<feature type="helix" evidence="15">
    <location>
        <begin position="152"/>
        <end position="156"/>
    </location>
</feature>
<feature type="helix" evidence="15">
    <location>
        <begin position="161"/>
        <end position="163"/>
    </location>
</feature>
<feature type="helix" evidence="15">
    <location>
        <begin position="183"/>
        <end position="189"/>
    </location>
</feature>
<feature type="helix" evidence="15">
    <location>
        <begin position="191"/>
        <end position="195"/>
    </location>
</feature>
<feature type="strand" evidence="15">
    <location>
        <begin position="200"/>
        <end position="203"/>
    </location>
</feature>
<feature type="strand" evidence="15">
    <location>
        <begin position="207"/>
        <end position="214"/>
    </location>
</feature>
<feature type="strand" evidence="15">
    <location>
        <begin position="216"/>
        <end position="221"/>
    </location>
</feature>
<feature type="strand" evidence="15">
    <location>
        <begin position="228"/>
        <end position="235"/>
    </location>
</feature>
<feature type="strand" evidence="15">
    <location>
        <begin position="237"/>
        <end position="241"/>
    </location>
</feature>
<feature type="strand" evidence="15">
    <location>
        <begin position="244"/>
        <end position="248"/>
    </location>
</feature>
<feature type="strand" evidence="15">
    <location>
        <begin position="252"/>
        <end position="256"/>
    </location>
</feature>
<feature type="strand" evidence="15">
    <location>
        <begin position="262"/>
        <end position="266"/>
    </location>
</feature>
<feature type="strand" evidence="15">
    <location>
        <begin position="271"/>
        <end position="277"/>
    </location>
</feature>
<feature type="helix" evidence="15">
    <location>
        <begin position="279"/>
        <end position="281"/>
    </location>
</feature>
<protein>
    <recommendedName>
        <fullName evidence="1">3-hydroxyanthranilate 3,4-dioxygenase</fullName>
        <ecNumber evidence="1 4">1.13.11.6</ecNumber>
    </recommendedName>
    <alternativeName>
        <fullName evidence="1">3-hydroxyanthranilate oxygenase</fullName>
        <shortName evidence="1">3-HAO</shortName>
        <shortName evidence="9">h3HAO</shortName>
    </alternativeName>
    <alternativeName>
        <fullName evidence="1">3-hydroxyanthranilic acid dioxygenase</fullName>
        <shortName evidence="1">HAD</shortName>
    </alternativeName>
</protein>
<dbReference type="EC" id="1.13.11.6" evidence="1 4"/>
<dbReference type="EMBL" id="Z29481">
    <property type="protein sequence ID" value="CAA82618.1"/>
    <property type="molecule type" value="mRNA"/>
</dbReference>
<dbReference type="EMBL" id="CR457063">
    <property type="protein sequence ID" value="CAG33344.1"/>
    <property type="molecule type" value="mRNA"/>
</dbReference>
<dbReference type="EMBL" id="CR624693">
    <property type="status" value="NOT_ANNOTATED_CDS"/>
    <property type="molecule type" value="mRNA"/>
</dbReference>
<dbReference type="EMBL" id="AK295693">
    <property type="protein sequence ID" value="BAG58544.1"/>
    <property type="molecule type" value="mRNA"/>
</dbReference>
<dbReference type="EMBL" id="AC098824">
    <property type="protein sequence ID" value="AAY14701.1"/>
    <property type="molecule type" value="Genomic_DNA"/>
</dbReference>
<dbReference type="EMBL" id="CH471053">
    <property type="protein sequence ID" value="EAX00309.1"/>
    <property type="molecule type" value="Genomic_DNA"/>
</dbReference>
<dbReference type="EMBL" id="BC029510">
    <property type="protein sequence ID" value="AAH29510.1"/>
    <property type="molecule type" value="mRNA"/>
</dbReference>
<dbReference type="CCDS" id="CCDS33187.1">
    <molecule id="P46952-1"/>
</dbReference>
<dbReference type="PIR" id="A54070">
    <property type="entry name" value="A54070"/>
</dbReference>
<dbReference type="RefSeq" id="NP_036337.2">
    <molecule id="P46952-1"/>
    <property type="nucleotide sequence ID" value="NM_012205.3"/>
</dbReference>
<dbReference type="PDB" id="2QNK">
    <property type="method" value="X-ray"/>
    <property type="resolution" value="1.60 A"/>
    <property type="chains" value="A=2-286"/>
</dbReference>
<dbReference type="PDB" id="5TK5">
    <property type="method" value="X-ray"/>
    <property type="resolution" value="1.88 A"/>
    <property type="chains" value="A=1-286"/>
</dbReference>
<dbReference type="PDB" id="5TKQ">
    <property type="method" value="X-ray"/>
    <property type="resolution" value="1.75 A"/>
    <property type="chains" value="A=1-286"/>
</dbReference>
<dbReference type="PDBsum" id="2QNK"/>
<dbReference type="PDBsum" id="5TK5"/>
<dbReference type="PDBsum" id="5TKQ"/>
<dbReference type="SMR" id="P46952"/>
<dbReference type="BioGRID" id="117047">
    <property type="interactions" value="6"/>
</dbReference>
<dbReference type="FunCoup" id="P46952">
    <property type="interactions" value="874"/>
</dbReference>
<dbReference type="IntAct" id="P46952">
    <property type="interactions" value="6"/>
</dbReference>
<dbReference type="MINT" id="P46952"/>
<dbReference type="STRING" id="9606.ENSP00000294973"/>
<dbReference type="BindingDB" id="P46952"/>
<dbReference type="ChEMBL" id="CHEMBL3108657"/>
<dbReference type="iPTMnet" id="P46952"/>
<dbReference type="PhosphoSitePlus" id="P46952"/>
<dbReference type="BioMuta" id="HAAO"/>
<dbReference type="DMDM" id="308153402"/>
<dbReference type="jPOST" id="P46952"/>
<dbReference type="MassIVE" id="P46952"/>
<dbReference type="PaxDb" id="9606-ENSP00000294973"/>
<dbReference type="PeptideAtlas" id="P46952"/>
<dbReference type="ProteomicsDB" id="55777">
    <molecule id="P46952-1"/>
</dbReference>
<dbReference type="ProteomicsDB" id="55778">
    <molecule id="P46952-2"/>
</dbReference>
<dbReference type="Antibodypedia" id="29790">
    <property type="antibodies" value="173 antibodies from 32 providers"/>
</dbReference>
<dbReference type="DNASU" id="23498"/>
<dbReference type="Ensembl" id="ENST00000294973.11">
    <molecule id="P46952-1"/>
    <property type="protein sequence ID" value="ENSP00000294973.6"/>
    <property type="gene ID" value="ENSG00000162882.15"/>
</dbReference>
<dbReference type="GeneID" id="23498"/>
<dbReference type="KEGG" id="hsa:23498"/>
<dbReference type="MANE-Select" id="ENST00000294973.11">
    <property type="protein sequence ID" value="ENSP00000294973.6"/>
    <property type="RefSeq nucleotide sequence ID" value="NM_012205.3"/>
    <property type="RefSeq protein sequence ID" value="NP_036337.2"/>
</dbReference>
<dbReference type="UCSC" id="uc002rst.5">
    <molecule id="P46952-1"/>
    <property type="organism name" value="human"/>
</dbReference>
<dbReference type="AGR" id="HGNC:4796"/>
<dbReference type="CTD" id="23498"/>
<dbReference type="DisGeNET" id="23498"/>
<dbReference type="GeneCards" id="HAAO"/>
<dbReference type="GeneReviews" id="HAAO"/>
<dbReference type="HGNC" id="HGNC:4796">
    <property type="gene designation" value="HAAO"/>
</dbReference>
<dbReference type="HPA" id="ENSG00000162882">
    <property type="expression patterns" value="Tissue enriched (liver)"/>
</dbReference>
<dbReference type="MalaCards" id="HAAO"/>
<dbReference type="MIM" id="604521">
    <property type="type" value="gene"/>
</dbReference>
<dbReference type="MIM" id="617660">
    <property type="type" value="phenotype"/>
</dbReference>
<dbReference type="neXtProt" id="NX_P46952"/>
<dbReference type="OpenTargets" id="ENSG00000162882"/>
<dbReference type="Orphanet" id="521438">
    <property type="disease" value="Congenital vertebral-cardiac-renal anomalies syndrome"/>
</dbReference>
<dbReference type="PharmGKB" id="PA29171"/>
<dbReference type="VEuPathDB" id="HostDB:ENSG00000162882"/>
<dbReference type="eggNOG" id="KOG3995">
    <property type="taxonomic scope" value="Eukaryota"/>
</dbReference>
<dbReference type="GeneTree" id="ENSGT00390000013008"/>
<dbReference type="HOGENOM" id="CLU_064845_1_0_1"/>
<dbReference type="InParanoid" id="P46952"/>
<dbReference type="OMA" id="MWLWQLE"/>
<dbReference type="OrthoDB" id="204928at2759"/>
<dbReference type="PAN-GO" id="P46952">
    <property type="GO annotations" value="4 GO annotations based on evolutionary models"/>
</dbReference>
<dbReference type="PhylomeDB" id="P46952"/>
<dbReference type="TreeFam" id="TF300246"/>
<dbReference type="BioCyc" id="MetaCyc:HS08749-MONOMER"/>
<dbReference type="BRENDA" id="1.13.11.6">
    <property type="organism ID" value="2681"/>
</dbReference>
<dbReference type="PathwayCommons" id="P46952"/>
<dbReference type="Reactome" id="R-HSA-71240">
    <property type="pathway name" value="Tryptophan catabolism"/>
</dbReference>
<dbReference type="SignaLink" id="P46952"/>
<dbReference type="UniPathway" id="UPA00253">
    <property type="reaction ID" value="UER00330"/>
</dbReference>
<dbReference type="BioGRID-ORCS" id="23498">
    <property type="hits" value="13 hits in 1144 CRISPR screens"/>
</dbReference>
<dbReference type="ChiTaRS" id="HAAO">
    <property type="organism name" value="human"/>
</dbReference>
<dbReference type="EvolutionaryTrace" id="P46952"/>
<dbReference type="GenomeRNAi" id="23498"/>
<dbReference type="Pharos" id="P46952">
    <property type="development level" value="Tbio"/>
</dbReference>
<dbReference type="PRO" id="PR:P46952"/>
<dbReference type="Proteomes" id="UP000005640">
    <property type="component" value="Chromosome 2"/>
</dbReference>
<dbReference type="RNAct" id="P46952">
    <property type="molecule type" value="protein"/>
</dbReference>
<dbReference type="Bgee" id="ENSG00000162882">
    <property type="expression patterns" value="Expressed in right lobe of liver and 104 other cell types or tissues"/>
</dbReference>
<dbReference type="ExpressionAtlas" id="P46952">
    <property type="expression patterns" value="baseline and differential"/>
</dbReference>
<dbReference type="GO" id="GO:0005737">
    <property type="term" value="C:cytoplasm"/>
    <property type="evidence" value="ECO:0000318"/>
    <property type="project" value="GO_Central"/>
</dbReference>
<dbReference type="GO" id="GO:0005829">
    <property type="term" value="C:cytosol"/>
    <property type="evidence" value="ECO:0000314"/>
    <property type="project" value="UniProtKB"/>
</dbReference>
<dbReference type="GO" id="GO:0000334">
    <property type="term" value="F:3-hydroxyanthranilate 3,4-dioxygenase activity"/>
    <property type="evidence" value="ECO:0000314"/>
    <property type="project" value="UniProtKB"/>
</dbReference>
<dbReference type="GO" id="GO:0009055">
    <property type="term" value="F:electron transfer activity"/>
    <property type="evidence" value="ECO:0000303"/>
    <property type="project" value="UniProtKB"/>
</dbReference>
<dbReference type="GO" id="GO:0008198">
    <property type="term" value="F:ferrous iron binding"/>
    <property type="evidence" value="ECO:0000314"/>
    <property type="project" value="UniProtKB"/>
</dbReference>
<dbReference type="GO" id="GO:0034354">
    <property type="term" value="P:'de novo' NAD biosynthetic process from L-tryptophan"/>
    <property type="evidence" value="ECO:0000318"/>
    <property type="project" value="GO_Central"/>
</dbReference>
<dbReference type="GO" id="GO:0043420">
    <property type="term" value="P:anthranilate metabolic process"/>
    <property type="evidence" value="ECO:0007669"/>
    <property type="project" value="UniProtKB-UniRule"/>
</dbReference>
<dbReference type="GO" id="GO:0006569">
    <property type="term" value="P:L-tryptophan catabolic process"/>
    <property type="evidence" value="ECO:0007669"/>
    <property type="project" value="UniProtKB-UniRule"/>
</dbReference>
<dbReference type="GO" id="GO:0009435">
    <property type="term" value="P:NAD biosynthetic process"/>
    <property type="evidence" value="ECO:0000315"/>
    <property type="project" value="UniProtKB"/>
</dbReference>
<dbReference type="GO" id="GO:0070050">
    <property type="term" value="P:neuron cellular homeostasis"/>
    <property type="evidence" value="ECO:0000315"/>
    <property type="project" value="UniProtKB"/>
</dbReference>
<dbReference type="GO" id="GO:0019805">
    <property type="term" value="P:quinolinate biosynthetic process"/>
    <property type="evidence" value="ECO:0000314"/>
    <property type="project" value="UniProtKB"/>
</dbReference>
<dbReference type="GO" id="GO:0046874">
    <property type="term" value="P:quinolinate metabolic process"/>
    <property type="evidence" value="ECO:0000318"/>
    <property type="project" value="GO_Central"/>
</dbReference>
<dbReference type="GO" id="GO:0046686">
    <property type="term" value="P:response to cadmium ion"/>
    <property type="evidence" value="ECO:0000314"/>
    <property type="project" value="UniProtKB"/>
</dbReference>
<dbReference type="GO" id="GO:0010043">
    <property type="term" value="P:response to zinc ion"/>
    <property type="evidence" value="ECO:0000314"/>
    <property type="project" value="UniProtKB"/>
</dbReference>
<dbReference type="CDD" id="cd06123">
    <property type="entry name" value="cupin_HAO"/>
    <property type="match status" value="1"/>
</dbReference>
<dbReference type="FunFam" id="2.60.120.10:FF:000077">
    <property type="entry name" value="3-hydroxyanthranilate 3,4-dioxygenase"/>
    <property type="match status" value="1"/>
</dbReference>
<dbReference type="Gene3D" id="2.60.120.10">
    <property type="entry name" value="Jelly Rolls"/>
    <property type="match status" value="1"/>
</dbReference>
<dbReference type="HAMAP" id="MF_00825">
    <property type="entry name" value="3_HAO"/>
    <property type="match status" value="1"/>
</dbReference>
<dbReference type="InterPro" id="IPR010329">
    <property type="entry name" value="3hydroanth_dOase"/>
</dbReference>
<dbReference type="InterPro" id="IPR016700">
    <property type="entry name" value="3hydroanth_dOase_met"/>
</dbReference>
<dbReference type="InterPro" id="IPR014710">
    <property type="entry name" value="RmlC-like_jellyroll"/>
</dbReference>
<dbReference type="InterPro" id="IPR011051">
    <property type="entry name" value="RmlC_Cupin_sf"/>
</dbReference>
<dbReference type="NCBIfam" id="TIGR03037">
    <property type="entry name" value="anthran_nbaC"/>
    <property type="match status" value="1"/>
</dbReference>
<dbReference type="PANTHER" id="PTHR15497">
    <property type="entry name" value="3-HYDROXYANTHRANILATE 3,4-DIOXYGENASE"/>
    <property type="match status" value="1"/>
</dbReference>
<dbReference type="PANTHER" id="PTHR15497:SF1">
    <property type="entry name" value="3-HYDROXYANTHRANILATE 3,4-DIOXYGENASE"/>
    <property type="match status" value="1"/>
</dbReference>
<dbReference type="Pfam" id="PF06052">
    <property type="entry name" value="3-HAO"/>
    <property type="match status" value="1"/>
</dbReference>
<dbReference type="PIRSF" id="PIRSF017681">
    <property type="entry name" value="3hydroanth_dOase_animal"/>
    <property type="match status" value="1"/>
</dbReference>
<dbReference type="SUPFAM" id="SSF51182">
    <property type="entry name" value="RmlC-like cupins"/>
    <property type="match status" value="2"/>
</dbReference>
<comment type="function">
    <text evidence="1 3 4">Catalyzes the oxidative ring opening of 3-hydroxyanthranilate to 2-amino-3-carboxymuconate semialdehyde, which spontaneously cyclizes to quinolinate.</text>
</comment>
<comment type="catalytic activity">
    <reaction evidence="1 3 4">
        <text>3-hydroxyanthranilate + O2 = (2Z,4Z)-2-amino-3-carboxymuconate 6-semialdehyde</text>
        <dbReference type="Rhea" id="RHEA:17953"/>
        <dbReference type="ChEBI" id="CHEBI:15379"/>
        <dbReference type="ChEBI" id="CHEBI:36559"/>
        <dbReference type="ChEBI" id="CHEBI:77612"/>
        <dbReference type="EC" id="1.13.11.6"/>
    </reaction>
</comment>
<comment type="cofactor">
    <cofactor evidence="1 2 4">
        <name>Fe(2+)</name>
        <dbReference type="ChEBI" id="CHEBI:29033"/>
    </cofactor>
</comment>
<comment type="pathway">
    <text evidence="1 3">Cofactor biosynthesis; NAD(+) biosynthesis; quinolinate from L-kynurenine: step 3/3.</text>
</comment>
<comment type="subunit">
    <text evidence="1 2 5">Monomer.</text>
</comment>
<comment type="interaction">
    <interactant intactId="EBI-743215">
        <id>P46952</id>
    </interactant>
    <interactant intactId="EBI-10209663">
        <id>Q8IVA8</id>
        <label>GAD1</label>
    </interactant>
    <organismsDiffer>false</organismsDiffer>
    <experiments>3</experiments>
</comment>
<comment type="interaction">
    <interactant intactId="EBI-743215">
        <id>P46952</id>
    </interactant>
    <interactant intactId="EBI-743184">
        <id>Q99259</id>
        <label>GAD1</label>
    </interactant>
    <organismsDiffer>false</organismsDiffer>
    <experiments>8</experiments>
</comment>
<comment type="interaction">
    <interactant intactId="EBI-743215">
        <id>P46952</id>
    </interactant>
    <interactant intactId="EBI-752420">
        <id>Q9NUX5</id>
        <label>POT1</label>
    </interactant>
    <organismsDiffer>false</organismsDiffer>
    <experiments>2</experiments>
</comment>
<comment type="subcellular location">
    <subcellularLocation>
        <location evidence="11">Cytoplasm</location>
        <location evidence="11">Cytosol</location>
    </subcellularLocation>
</comment>
<comment type="alternative products">
    <event type="alternative splicing"/>
    <isoform>
        <id>P46952-1</id>
        <name>1</name>
        <sequence type="displayed"/>
    </isoform>
    <isoform>
        <id>P46952-2</id>
        <name>2</name>
        <sequence type="described" ref="VSP_036239"/>
    </isoform>
</comment>
<comment type="disease" evidence="3">
    <disease id="DI-05094">
        <name>Vertebral, cardiac, renal, and limb defects syndrome 1</name>
        <acronym>VCRL1</acronym>
        <description>An autosomal recessive congenital malformation syndrome characterized by vertebral segmentation abnormalities, congenital cardiac defects, renal defects, and distal mild limb defects.</description>
        <dbReference type="MIM" id="617660"/>
    </disease>
    <text>The disease is caused by variants affecting the gene represented in this entry.</text>
</comment>
<comment type="similarity">
    <text evidence="1">Belongs to the 3-HAO family.</text>
</comment>
<reference key="1">
    <citation type="journal article" date="1994" name="J. Biol. Chem.">
        <title>Molecular cloning and functional expression of human 3-hydroxyanthranilic-acid dioxygenase.</title>
        <authorList>
            <person name="Malherbe P."/>
            <person name="Kohler C."/>
            <person name="da Prada M."/>
            <person name="Lang G."/>
            <person name="Kiefer V."/>
            <person name="Schwarcz R."/>
            <person name="Lahm H."/>
            <person name="Cesura A.M."/>
        </authorList>
    </citation>
    <scope>NUCLEOTIDE SEQUENCE [MRNA] (ISOFORM 1)</scope>
    <scope>FUNCTION</scope>
    <scope>CATALYTIC ACTIVITY</scope>
    <scope>SUBCELLULAR LOCATION</scope>
    <scope>COFACTOR</scope>
    <scope>VARIANT VAL-37</scope>
</reference>
<reference key="2">
    <citation type="submission" date="2004-06" db="EMBL/GenBank/DDBJ databases">
        <title>Cloning of human full open reading frames in Gateway(TM) system entry vector (pDONR201).</title>
        <authorList>
            <person name="Ebert L."/>
            <person name="Schick M."/>
            <person name="Neubert P."/>
            <person name="Schatten R."/>
            <person name="Henze S."/>
            <person name="Korn B."/>
        </authorList>
    </citation>
    <scope>NUCLEOTIDE SEQUENCE [LARGE SCALE MRNA] (ISOFORM 1)</scope>
    <scope>VARIANT VAL-37</scope>
</reference>
<reference key="3">
    <citation type="submission" date="2004-07" db="EMBL/GenBank/DDBJ databases">
        <title>Full-length cDNA libraries and normalization.</title>
        <authorList>
            <person name="Li W.B."/>
            <person name="Gruber C."/>
            <person name="Jessee J."/>
            <person name="Polayes D."/>
        </authorList>
    </citation>
    <scope>NUCLEOTIDE SEQUENCE [LARGE SCALE MRNA] (ISOFORM 2)</scope>
    <source>
        <tissue>Placenta</tissue>
    </source>
</reference>
<reference key="4">
    <citation type="journal article" date="2004" name="Nat. Genet.">
        <title>Complete sequencing and characterization of 21,243 full-length human cDNAs.</title>
        <authorList>
            <person name="Ota T."/>
            <person name="Suzuki Y."/>
            <person name="Nishikawa T."/>
            <person name="Otsuki T."/>
            <person name="Sugiyama T."/>
            <person name="Irie R."/>
            <person name="Wakamatsu A."/>
            <person name="Hayashi K."/>
            <person name="Sato H."/>
            <person name="Nagai K."/>
            <person name="Kimura K."/>
            <person name="Makita H."/>
            <person name="Sekine M."/>
            <person name="Obayashi M."/>
            <person name="Nishi T."/>
            <person name="Shibahara T."/>
            <person name="Tanaka T."/>
            <person name="Ishii S."/>
            <person name="Yamamoto J."/>
            <person name="Saito K."/>
            <person name="Kawai Y."/>
            <person name="Isono Y."/>
            <person name="Nakamura Y."/>
            <person name="Nagahari K."/>
            <person name="Murakami K."/>
            <person name="Yasuda T."/>
            <person name="Iwayanagi T."/>
            <person name="Wagatsuma M."/>
            <person name="Shiratori A."/>
            <person name="Sudo H."/>
            <person name="Hosoiri T."/>
            <person name="Kaku Y."/>
            <person name="Kodaira H."/>
            <person name="Kondo H."/>
            <person name="Sugawara M."/>
            <person name="Takahashi M."/>
            <person name="Kanda K."/>
            <person name="Yokoi T."/>
            <person name="Furuya T."/>
            <person name="Kikkawa E."/>
            <person name="Omura Y."/>
            <person name="Abe K."/>
            <person name="Kamihara K."/>
            <person name="Katsuta N."/>
            <person name="Sato K."/>
            <person name="Tanikawa M."/>
            <person name="Yamazaki M."/>
            <person name="Ninomiya K."/>
            <person name="Ishibashi T."/>
            <person name="Yamashita H."/>
            <person name="Murakawa K."/>
            <person name="Fujimori K."/>
            <person name="Tanai H."/>
            <person name="Kimata M."/>
            <person name="Watanabe M."/>
            <person name="Hiraoka S."/>
            <person name="Chiba Y."/>
            <person name="Ishida S."/>
            <person name="Ono Y."/>
            <person name="Takiguchi S."/>
            <person name="Watanabe S."/>
            <person name="Yosida M."/>
            <person name="Hotuta T."/>
            <person name="Kusano J."/>
            <person name="Kanehori K."/>
            <person name="Takahashi-Fujii A."/>
            <person name="Hara H."/>
            <person name="Tanase T.-O."/>
            <person name="Nomura Y."/>
            <person name="Togiya S."/>
            <person name="Komai F."/>
            <person name="Hara R."/>
            <person name="Takeuchi K."/>
            <person name="Arita M."/>
            <person name="Imose N."/>
            <person name="Musashino K."/>
            <person name="Yuuki H."/>
            <person name="Oshima A."/>
            <person name="Sasaki N."/>
            <person name="Aotsuka S."/>
            <person name="Yoshikawa Y."/>
            <person name="Matsunawa H."/>
            <person name="Ichihara T."/>
            <person name="Shiohata N."/>
            <person name="Sano S."/>
            <person name="Moriya S."/>
            <person name="Momiyama H."/>
            <person name="Satoh N."/>
            <person name="Takami S."/>
            <person name="Terashima Y."/>
            <person name="Suzuki O."/>
            <person name="Nakagawa S."/>
            <person name="Senoh A."/>
            <person name="Mizoguchi H."/>
            <person name="Goto Y."/>
            <person name="Shimizu F."/>
            <person name="Wakebe H."/>
            <person name="Hishigaki H."/>
            <person name="Watanabe T."/>
            <person name="Sugiyama A."/>
            <person name="Takemoto M."/>
            <person name="Kawakami B."/>
            <person name="Yamazaki M."/>
            <person name="Watanabe K."/>
            <person name="Kumagai A."/>
            <person name="Itakura S."/>
            <person name="Fukuzumi Y."/>
            <person name="Fujimori Y."/>
            <person name="Komiyama M."/>
            <person name="Tashiro H."/>
            <person name="Tanigami A."/>
            <person name="Fujiwara T."/>
            <person name="Ono T."/>
            <person name="Yamada K."/>
            <person name="Fujii Y."/>
            <person name="Ozaki K."/>
            <person name="Hirao M."/>
            <person name="Ohmori Y."/>
            <person name="Kawabata A."/>
            <person name="Hikiji T."/>
            <person name="Kobatake N."/>
            <person name="Inagaki H."/>
            <person name="Ikema Y."/>
            <person name="Okamoto S."/>
            <person name="Okitani R."/>
            <person name="Kawakami T."/>
            <person name="Noguchi S."/>
            <person name="Itoh T."/>
            <person name="Shigeta K."/>
            <person name="Senba T."/>
            <person name="Matsumura K."/>
            <person name="Nakajima Y."/>
            <person name="Mizuno T."/>
            <person name="Morinaga M."/>
            <person name="Sasaki M."/>
            <person name="Togashi T."/>
            <person name="Oyama M."/>
            <person name="Hata H."/>
            <person name="Watanabe M."/>
            <person name="Komatsu T."/>
            <person name="Mizushima-Sugano J."/>
            <person name="Satoh T."/>
            <person name="Shirai Y."/>
            <person name="Takahashi Y."/>
            <person name="Nakagawa K."/>
            <person name="Okumura K."/>
            <person name="Nagase T."/>
            <person name="Nomura N."/>
            <person name="Kikuchi H."/>
            <person name="Masuho Y."/>
            <person name="Yamashita R."/>
            <person name="Nakai K."/>
            <person name="Yada T."/>
            <person name="Nakamura Y."/>
            <person name="Ohara O."/>
            <person name="Isogai T."/>
            <person name="Sugano S."/>
        </authorList>
    </citation>
    <scope>NUCLEOTIDE SEQUENCE [LARGE SCALE MRNA] (ISOFORM 2)</scope>
    <source>
        <tissue>Hippocampus</tissue>
    </source>
</reference>
<reference key="5">
    <citation type="journal article" date="2005" name="Nature">
        <title>Generation and annotation of the DNA sequences of human chromosomes 2 and 4.</title>
        <authorList>
            <person name="Hillier L.W."/>
            <person name="Graves T.A."/>
            <person name="Fulton R.S."/>
            <person name="Fulton L.A."/>
            <person name="Pepin K.H."/>
            <person name="Minx P."/>
            <person name="Wagner-McPherson C."/>
            <person name="Layman D."/>
            <person name="Wylie K."/>
            <person name="Sekhon M."/>
            <person name="Becker M.C."/>
            <person name="Fewell G.A."/>
            <person name="Delehaunty K.D."/>
            <person name="Miner T.L."/>
            <person name="Nash W.E."/>
            <person name="Kremitzki C."/>
            <person name="Oddy L."/>
            <person name="Du H."/>
            <person name="Sun H."/>
            <person name="Bradshaw-Cordum H."/>
            <person name="Ali J."/>
            <person name="Carter J."/>
            <person name="Cordes M."/>
            <person name="Harris A."/>
            <person name="Isak A."/>
            <person name="van Brunt A."/>
            <person name="Nguyen C."/>
            <person name="Du F."/>
            <person name="Courtney L."/>
            <person name="Kalicki J."/>
            <person name="Ozersky P."/>
            <person name="Abbott S."/>
            <person name="Armstrong J."/>
            <person name="Belter E.A."/>
            <person name="Caruso L."/>
            <person name="Cedroni M."/>
            <person name="Cotton M."/>
            <person name="Davidson T."/>
            <person name="Desai A."/>
            <person name="Elliott G."/>
            <person name="Erb T."/>
            <person name="Fronick C."/>
            <person name="Gaige T."/>
            <person name="Haakenson W."/>
            <person name="Haglund K."/>
            <person name="Holmes A."/>
            <person name="Harkins R."/>
            <person name="Kim K."/>
            <person name="Kruchowski S.S."/>
            <person name="Strong C.M."/>
            <person name="Grewal N."/>
            <person name="Goyea E."/>
            <person name="Hou S."/>
            <person name="Levy A."/>
            <person name="Martinka S."/>
            <person name="Mead K."/>
            <person name="McLellan M.D."/>
            <person name="Meyer R."/>
            <person name="Randall-Maher J."/>
            <person name="Tomlinson C."/>
            <person name="Dauphin-Kohlberg S."/>
            <person name="Kozlowicz-Reilly A."/>
            <person name="Shah N."/>
            <person name="Swearengen-Shahid S."/>
            <person name="Snider J."/>
            <person name="Strong J.T."/>
            <person name="Thompson J."/>
            <person name="Yoakum M."/>
            <person name="Leonard S."/>
            <person name="Pearman C."/>
            <person name="Trani L."/>
            <person name="Radionenko M."/>
            <person name="Waligorski J.E."/>
            <person name="Wang C."/>
            <person name="Rock S.M."/>
            <person name="Tin-Wollam A.-M."/>
            <person name="Maupin R."/>
            <person name="Latreille P."/>
            <person name="Wendl M.C."/>
            <person name="Yang S.-P."/>
            <person name="Pohl C."/>
            <person name="Wallis J.W."/>
            <person name="Spieth J."/>
            <person name="Bieri T.A."/>
            <person name="Berkowicz N."/>
            <person name="Nelson J.O."/>
            <person name="Osborne J."/>
            <person name="Ding L."/>
            <person name="Meyer R."/>
            <person name="Sabo A."/>
            <person name="Shotland Y."/>
            <person name="Sinha P."/>
            <person name="Wohldmann P.E."/>
            <person name="Cook L.L."/>
            <person name="Hickenbotham M.T."/>
            <person name="Eldred J."/>
            <person name="Williams D."/>
            <person name="Jones T.A."/>
            <person name="She X."/>
            <person name="Ciccarelli F.D."/>
            <person name="Izaurralde E."/>
            <person name="Taylor J."/>
            <person name="Schmutz J."/>
            <person name="Myers R.M."/>
            <person name="Cox D.R."/>
            <person name="Huang X."/>
            <person name="McPherson J.D."/>
            <person name="Mardis E.R."/>
            <person name="Clifton S.W."/>
            <person name="Warren W.C."/>
            <person name="Chinwalla A.T."/>
            <person name="Eddy S.R."/>
            <person name="Marra M.A."/>
            <person name="Ovcharenko I."/>
            <person name="Furey T.S."/>
            <person name="Miller W."/>
            <person name="Eichler E.E."/>
            <person name="Bork P."/>
            <person name="Suyama M."/>
            <person name="Torrents D."/>
            <person name="Waterston R.H."/>
            <person name="Wilson R.K."/>
        </authorList>
    </citation>
    <scope>NUCLEOTIDE SEQUENCE [LARGE SCALE GENOMIC DNA]</scope>
</reference>
<reference key="6">
    <citation type="submission" date="2005-09" db="EMBL/GenBank/DDBJ databases">
        <authorList>
            <person name="Mural R.J."/>
            <person name="Istrail S."/>
            <person name="Sutton G.G."/>
            <person name="Florea L."/>
            <person name="Halpern A.L."/>
            <person name="Mobarry C.M."/>
            <person name="Lippert R."/>
            <person name="Walenz B."/>
            <person name="Shatkay H."/>
            <person name="Dew I."/>
            <person name="Miller J.R."/>
            <person name="Flanigan M.J."/>
            <person name="Edwards N.J."/>
            <person name="Bolanos R."/>
            <person name="Fasulo D."/>
            <person name="Halldorsson B.V."/>
            <person name="Hannenhalli S."/>
            <person name="Turner R."/>
            <person name="Yooseph S."/>
            <person name="Lu F."/>
            <person name="Nusskern D.R."/>
            <person name="Shue B.C."/>
            <person name="Zheng X.H."/>
            <person name="Zhong F."/>
            <person name="Delcher A.L."/>
            <person name="Huson D.H."/>
            <person name="Kravitz S.A."/>
            <person name="Mouchard L."/>
            <person name="Reinert K."/>
            <person name="Remington K.A."/>
            <person name="Clark A.G."/>
            <person name="Waterman M.S."/>
            <person name="Eichler E.E."/>
            <person name="Adams M.D."/>
            <person name="Hunkapiller M.W."/>
            <person name="Myers E.W."/>
            <person name="Venter J.C."/>
        </authorList>
    </citation>
    <scope>NUCLEOTIDE SEQUENCE [LARGE SCALE GENOMIC DNA]</scope>
    <scope>VARIANT VAL-37</scope>
</reference>
<reference key="7">
    <citation type="journal article" date="2004" name="Genome Res.">
        <title>The status, quality, and expansion of the NIH full-length cDNA project: the Mammalian Gene Collection (MGC).</title>
        <authorList>
            <consortium name="The MGC Project Team"/>
        </authorList>
    </citation>
    <scope>NUCLEOTIDE SEQUENCE [LARGE SCALE MRNA] (ISOFORM 1)</scope>
    <source>
        <tissue>Brain</tissue>
    </source>
</reference>
<reference key="8">
    <citation type="journal article" date="2014" name="J. Proteomics">
        <title>An enzyme assisted RP-RPLC approach for in-depth analysis of human liver phosphoproteome.</title>
        <authorList>
            <person name="Bian Y."/>
            <person name="Song C."/>
            <person name="Cheng K."/>
            <person name="Dong M."/>
            <person name="Wang F."/>
            <person name="Huang J."/>
            <person name="Sun D."/>
            <person name="Wang L."/>
            <person name="Ye M."/>
            <person name="Zou H."/>
        </authorList>
    </citation>
    <scope>IDENTIFICATION BY MASS SPECTROMETRY [LARGE SCALE ANALYSIS]</scope>
    <source>
        <tissue>Liver</tissue>
    </source>
</reference>
<reference key="9">
    <citation type="journal article" date="2017" name="N. Engl. J. Med.">
        <title>NAD deficiency, congenital malformations, and niacin supplementation.</title>
        <authorList>
            <person name="Shi H."/>
            <person name="Enriquez A."/>
            <person name="Rapadas M."/>
            <person name="Martin E.M.M.A."/>
            <person name="Wang R."/>
            <person name="Moreau J."/>
            <person name="Lim C.K."/>
            <person name="Szot J.O."/>
            <person name="Ip E."/>
            <person name="Hughes J.N."/>
            <person name="Sugimoto K."/>
            <person name="Humphreys D.T."/>
            <person name="McInerney-Leo A.M."/>
            <person name="Leo P.J."/>
            <person name="Maghzal G.J."/>
            <person name="Halliday J."/>
            <person name="Smith J."/>
            <person name="Colley A."/>
            <person name="Mark P.R."/>
            <person name="Collins F."/>
            <person name="Sillence D.O."/>
            <person name="Winlaw D.S."/>
            <person name="Ho J.W.K."/>
            <person name="Guillemin G.J."/>
            <person name="Brown M.A."/>
            <person name="Kikuchi K."/>
            <person name="Thomas P.Q."/>
            <person name="Stocker R."/>
            <person name="Giannoulatou E."/>
            <person name="Chapman G."/>
            <person name="Duncan E.L."/>
            <person name="Sparrow D.B."/>
            <person name="Dunwoodie S.L."/>
        </authorList>
    </citation>
    <scope>INVOLVEMENT IN VCRL1</scope>
    <scope>FUNCTION</scope>
    <scope>PATHWAY</scope>
    <scope>CATALYTIC ACTIVITY</scope>
    <scope>VARIANTS VCRL1 162-ASP--GLY-286 DEL AND 186-TRP--GLY-286 DEL</scope>
    <scope>CHARACTERIZATION OF VARIANTS VCRL1 162-ASP--GLY-286 DEL AND 186-TRP--GLY-286 DEL</scope>
</reference>
<reference key="10">
    <citation type="submission" date="2007-08" db="PDB data bank">
        <title>Crystal structure of human 3-hydroxyanthranilate 3,4-dioxygenase.</title>
        <authorList>
            <consortium name="Center for eukaryotic structural genomics (CESG)"/>
        </authorList>
    </citation>
    <scope>X-RAY CRYSTALLOGRAPHY (1.6 ANGSTROMS) IN COMPLEX WITH NICKEL IONS</scope>
</reference>
<reference evidence="13 14" key="11">
    <citation type="journal article" date="2017" name="Acta Crystallogr. D">
        <title>Crystal structures of human 3-hydroxyanthranilate 3,4-dioxygenase with native and non-native metals bound in the active site.</title>
        <authorList>
            <person name="Pidugu L.S."/>
            <person name="Neu H."/>
            <person name="Wong T.L."/>
            <person name="Pozharski E."/>
            <person name="Molloy J.L."/>
            <person name="Michel S.L."/>
            <person name="Toth E.A."/>
        </authorList>
    </citation>
    <scope>X-RAY CRYSTALLOGRAPHY (1.75 ANGSTROMS) IN COMPLEX WITH IRON</scope>
    <scope>SUBUNIT</scope>
    <scope>COFACTOR</scope>
</reference>